<reference key="1">
    <citation type="journal article" date="1999" name="J. Appl. Microbiol.">
        <title>Sequence, assembly and analysis of pXO1 and pXO2.</title>
        <authorList>
            <person name="Okinaka R.T."/>
            <person name="Cloud K."/>
            <person name="Hampton O."/>
            <person name="Hoffmaster A."/>
            <person name="Hill K.K."/>
            <person name="Keim P."/>
            <person name="Koehler T."/>
            <person name="Lamke G."/>
            <person name="Kumano S."/>
            <person name="Manter D."/>
            <person name="Martinez Y."/>
            <person name="Ricke D."/>
            <person name="Svensson R."/>
            <person name="Jackson P.J."/>
        </authorList>
    </citation>
    <scope>NUCLEOTIDE SEQUENCE [GENOMIC DNA]</scope>
    <source>
        <strain>Pasteur</strain>
    </source>
</reference>
<reference key="2">
    <citation type="journal article" date="2002" name="Science">
        <title>Comparative genome sequencing for discovery of novel polymorphisms in Bacillus anthracis.</title>
        <authorList>
            <person name="Read T.D."/>
            <person name="Salzberg S.L."/>
            <person name="Pop M."/>
            <person name="Shumway M.F."/>
            <person name="Umayam L."/>
            <person name="Jiang L."/>
            <person name="Holtzapple E."/>
            <person name="Busch J.D."/>
            <person name="Smith K.L."/>
            <person name="Schupp J.M."/>
            <person name="Solomon D."/>
            <person name="Keim P."/>
            <person name="Fraser C.M."/>
        </authorList>
    </citation>
    <scope>NUCLEOTIDE SEQUENCE [GENOMIC DNA]</scope>
    <source>
        <strain>Ames / isolate Florida / A2012</strain>
    </source>
</reference>
<reference key="3">
    <citation type="journal article" date="2009" name="J. Bacteriol.">
        <title>The complete genome sequence of Bacillus anthracis Ames 'Ancestor'.</title>
        <authorList>
            <person name="Ravel J."/>
            <person name="Jiang L."/>
            <person name="Stanley S.T."/>
            <person name="Wilson M.R."/>
            <person name="Decker R.S."/>
            <person name="Read T.D."/>
            <person name="Worsham P."/>
            <person name="Keim P.S."/>
            <person name="Salzberg S.L."/>
            <person name="Fraser-Liggett C.M."/>
            <person name="Rasko D.A."/>
        </authorList>
    </citation>
    <scope>NUCLEOTIDE SEQUENCE [LARGE SCALE GENOMIC DNA]</scope>
    <source>
        <strain>Ames ancestor</strain>
    </source>
</reference>
<name>Y6549_BACAN</name>
<geneLocation type="plasmid">
    <name>pXO2</name>
</geneLocation>
<accession>Q9RMY8</accession>
<accession>Q8KYE5</accession>
<proteinExistence type="predicted"/>
<dbReference type="EMBL" id="AF188935">
    <property type="protein sequence ID" value="AAF13649.1"/>
    <property type="status" value="ALT_INIT"/>
    <property type="molecule type" value="Genomic_DNA"/>
</dbReference>
<dbReference type="EMBL" id="AE011191">
    <property type="protein sequence ID" value="AAM26207.1"/>
    <property type="molecule type" value="Genomic_DNA"/>
</dbReference>
<dbReference type="EMBL" id="AE017335">
    <property type="protein sequence ID" value="AAT28979.2"/>
    <property type="molecule type" value="Genomic_DNA"/>
</dbReference>
<dbReference type="RefSeq" id="NP_053199.1">
    <property type="nucleotide sequence ID" value="NC_002146.1"/>
</dbReference>
<dbReference type="KEGG" id="bar:GBAA_pXO2_0049"/>
<dbReference type="HOGENOM" id="CLU_153039_0_0_9"/>
<dbReference type="Proteomes" id="UP000000594">
    <property type="component" value="Plasmid pXO2"/>
</dbReference>
<gene>
    <name type="ordered locus">pXO2-44</name>
    <name type="ordered locus">BXB0049</name>
    <name type="ordered locus">GBAA_pXO2_0049</name>
</gene>
<comment type="sequence caution" evidence="1">
    <conflict type="erroneous initiation">
        <sequence resource="EMBL-CDS" id="AAF13649"/>
    </conflict>
</comment>
<organism>
    <name type="scientific">Bacillus anthracis</name>
    <dbReference type="NCBI Taxonomy" id="1392"/>
    <lineage>
        <taxon>Bacteria</taxon>
        <taxon>Bacillati</taxon>
        <taxon>Bacillota</taxon>
        <taxon>Bacilli</taxon>
        <taxon>Bacillales</taxon>
        <taxon>Bacillaceae</taxon>
        <taxon>Bacillus</taxon>
        <taxon>Bacillus cereus group</taxon>
    </lineage>
</organism>
<protein>
    <recommendedName>
        <fullName>Uncharacterized protein pXO2-44/BXB0049/GBAA_pXO2_0049</fullName>
    </recommendedName>
</protein>
<feature type="chain" id="PRO_0000216853" description="Uncharacterized protein pXO2-44/BXB0049/GBAA_pXO2_0049">
    <location>
        <begin position="1"/>
        <end position="100"/>
    </location>
</feature>
<keyword id="KW-0614">Plasmid</keyword>
<keyword id="KW-1185">Reference proteome</keyword>
<evidence type="ECO:0000305" key="1"/>
<sequence>MHHIGYEVLQETFVLIRNVFSYSNQGEYSVTYVREIADALYNIPHSIQKQHDTFLEFEFKLLEETLMQMEFGKVAAQNIPHFRMYAARVQQLLRKRYKEV</sequence>